<organism>
    <name type="scientific">Shewanella baltica (strain OS155 / ATCC BAA-1091)</name>
    <dbReference type="NCBI Taxonomy" id="325240"/>
    <lineage>
        <taxon>Bacteria</taxon>
        <taxon>Pseudomonadati</taxon>
        <taxon>Pseudomonadota</taxon>
        <taxon>Gammaproteobacteria</taxon>
        <taxon>Alteromonadales</taxon>
        <taxon>Shewanellaceae</taxon>
        <taxon>Shewanella</taxon>
    </lineage>
</organism>
<comment type="function">
    <text evidence="1">Catalyzes the conversion of S-adenosyl-L-methionine (SAM) to carboxy-S-adenosyl-L-methionine (Cx-SAM).</text>
</comment>
<comment type="catalytic activity">
    <reaction evidence="1">
        <text>prephenate + S-adenosyl-L-methionine = carboxy-S-adenosyl-L-methionine + 3-phenylpyruvate + H2O</text>
        <dbReference type="Rhea" id="RHEA:51692"/>
        <dbReference type="ChEBI" id="CHEBI:15377"/>
        <dbReference type="ChEBI" id="CHEBI:18005"/>
        <dbReference type="ChEBI" id="CHEBI:29934"/>
        <dbReference type="ChEBI" id="CHEBI:59789"/>
        <dbReference type="ChEBI" id="CHEBI:134278"/>
    </reaction>
</comment>
<comment type="subunit">
    <text evidence="1">Homodimer.</text>
</comment>
<comment type="similarity">
    <text evidence="1">Belongs to the class I-like SAM-binding methyltransferase superfamily. Cx-SAM synthase family.</text>
</comment>
<name>CMOA_SHEB5</name>
<protein>
    <recommendedName>
        <fullName evidence="1">Carboxy-S-adenosyl-L-methionine synthase</fullName>
        <shortName evidence="1">Cx-SAM synthase</shortName>
        <ecNumber evidence="1">2.1.3.-</ecNumber>
    </recommendedName>
</protein>
<keyword id="KW-1185">Reference proteome</keyword>
<keyword id="KW-0949">S-adenosyl-L-methionine</keyword>
<keyword id="KW-0808">Transferase</keyword>
<accession>A3D475</accession>
<sequence length="243" mass="27456">MNVSQDTIYAQASEHISDFQFDNRVAGVFSDMIRRSVPGYTQIINTIGDFADRFVMPNTQIYDLGCSLGAATLSIRRQIQGRQCRIIAVDNSESMVARCQENLNAYVSDTDVDLVCGDIRDIDIQNASLVVLNFTLQFLPPEDRETLIAKIYQGLNPGGILVLSEKIRFEDAPIQTLLEEQHLDFKRANGYSELEISQKRSALENVMKPDTLTTHQQRLTSQGFSHFSLWFQCFNFASMVAIK</sequence>
<gene>
    <name evidence="1" type="primary">cmoA</name>
    <name type="ordered locus">Sbal_2036</name>
</gene>
<feature type="chain" id="PRO_0000314376" description="Carboxy-S-adenosyl-L-methionine synthase">
    <location>
        <begin position="1"/>
        <end position="243"/>
    </location>
</feature>
<feature type="binding site" evidence="1">
    <location>
        <position position="40"/>
    </location>
    <ligand>
        <name>S-adenosyl-L-methionine</name>
        <dbReference type="ChEBI" id="CHEBI:59789"/>
    </ligand>
</feature>
<feature type="binding site" evidence="1">
    <location>
        <begin position="65"/>
        <end position="67"/>
    </location>
    <ligand>
        <name>S-adenosyl-L-methionine</name>
        <dbReference type="ChEBI" id="CHEBI:59789"/>
    </ligand>
</feature>
<feature type="binding site" evidence="1">
    <location>
        <begin position="90"/>
        <end position="91"/>
    </location>
    <ligand>
        <name>S-adenosyl-L-methionine</name>
        <dbReference type="ChEBI" id="CHEBI:59789"/>
    </ligand>
</feature>
<feature type="binding site" evidence="1">
    <location>
        <begin position="118"/>
        <end position="119"/>
    </location>
    <ligand>
        <name>S-adenosyl-L-methionine</name>
        <dbReference type="ChEBI" id="CHEBI:59789"/>
    </ligand>
</feature>
<feature type="binding site" evidence="1">
    <location>
        <position position="133"/>
    </location>
    <ligand>
        <name>S-adenosyl-L-methionine</name>
        <dbReference type="ChEBI" id="CHEBI:59789"/>
    </ligand>
</feature>
<feature type="binding site" evidence="1">
    <location>
        <position position="200"/>
    </location>
    <ligand>
        <name>S-adenosyl-L-methionine</name>
        <dbReference type="ChEBI" id="CHEBI:59789"/>
    </ligand>
</feature>
<evidence type="ECO:0000255" key="1">
    <source>
        <dbReference type="HAMAP-Rule" id="MF_01589"/>
    </source>
</evidence>
<proteinExistence type="inferred from homology"/>
<reference key="1">
    <citation type="submission" date="2007-02" db="EMBL/GenBank/DDBJ databases">
        <title>Complete sequence of chromosome of Shewanella baltica OS155.</title>
        <authorList>
            <consortium name="US DOE Joint Genome Institute"/>
            <person name="Copeland A."/>
            <person name="Lucas S."/>
            <person name="Lapidus A."/>
            <person name="Barry K."/>
            <person name="Detter J.C."/>
            <person name="Glavina del Rio T."/>
            <person name="Hammon N."/>
            <person name="Israni S."/>
            <person name="Dalin E."/>
            <person name="Tice H."/>
            <person name="Pitluck S."/>
            <person name="Sims D.R."/>
            <person name="Brettin T."/>
            <person name="Bruce D."/>
            <person name="Han C."/>
            <person name="Tapia R."/>
            <person name="Brainard J."/>
            <person name="Schmutz J."/>
            <person name="Larimer F."/>
            <person name="Land M."/>
            <person name="Hauser L."/>
            <person name="Kyrpides N."/>
            <person name="Mikhailova N."/>
            <person name="Brettar I."/>
            <person name="Klappenbach J."/>
            <person name="Konstantinidis K."/>
            <person name="Rodrigues J."/>
            <person name="Tiedje J."/>
            <person name="Richardson P."/>
        </authorList>
    </citation>
    <scope>NUCLEOTIDE SEQUENCE [LARGE SCALE GENOMIC DNA]</scope>
    <source>
        <strain>OS155 / ATCC BAA-1091</strain>
    </source>
</reference>
<dbReference type="EC" id="2.1.3.-" evidence="1"/>
<dbReference type="EMBL" id="CP000563">
    <property type="protein sequence ID" value="ABN61538.1"/>
    <property type="molecule type" value="Genomic_DNA"/>
</dbReference>
<dbReference type="RefSeq" id="WP_006081747.1">
    <property type="nucleotide sequence ID" value="NC_009052.1"/>
</dbReference>
<dbReference type="SMR" id="A3D475"/>
<dbReference type="STRING" id="325240.Sbal_2036"/>
<dbReference type="GeneID" id="11772542"/>
<dbReference type="KEGG" id="sbl:Sbal_2036"/>
<dbReference type="HOGENOM" id="CLU_078475_0_0_6"/>
<dbReference type="OrthoDB" id="9779941at2"/>
<dbReference type="Proteomes" id="UP000001557">
    <property type="component" value="Chromosome"/>
</dbReference>
<dbReference type="GO" id="GO:0016743">
    <property type="term" value="F:carboxyl- or carbamoyltransferase activity"/>
    <property type="evidence" value="ECO:0007669"/>
    <property type="project" value="UniProtKB-UniRule"/>
</dbReference>
<dbReference type="GO" id="GO:1904047">
    <property type="term" value="F:S-adenosyl-L-methionine binding"/>
    <property type="evidence" value="ECO:0007669"/>
    <property type="project" value="UniProtKB-UniRule"/>
</dbReference>
<dbReference type="GO" id="GO:0002098">
    <property type="term" value="P:tRNA wobble uridine modification"/>
    <property type="evidence" value="ECO:0007669"/>
    <property type="project" value="InterPro"/>
</dbReference>
<dbReference type="CDD" id="cd02440">
    <property type="entry name" value="AdoMet_MTases"/>
    <property type="match status" value="1"/>
</dbReference>
<dbReference type="Gene3D" id="3.40.50.150">
    <property type="entry name" value="Vaccinia Virus protein VP39"/>
    <property type="match status" value="1"/>
</dbReference>
<dbReference type="HAMAP" id="MF_01589">
    <property type="entry name" value="Cx_SAM_synthase"/>
    <property type="match status" value="1"/>
</dbReference>
<dbReference type="InterPro" id="IPR005271">
    <property type="entry name" value="CmoA"/>
</dbReference>
<dbReference type="InterPro" id="IPR041698">
    <property type="entry name" value="Methyltransf_25"/>
</dbReference>
<dbReference type="InterPro" id="IPR029063">
    <property type="entry name" value="SAM-dependent_MTases_sf"/>
</dbReference>
<dbReference type="NCBIfam" id="TIGR00740">
    <property type="entry name" value="carboxy-S-adenosyl-L-methionine synthase CmoA"/>
    <property type="match status" value="1"/>
</dbReference>
<dbReference type="NCBIfam" id="NF011995">
    <property type="entry name" value="PRK15451.1"/>
    <property type="match status" value="1"/>
</dbReference>
<dbReference type="PANTHER" id="PTHR43861:SF2">
    <property type="entry name" value="CARBOXY-S-ADENOSYL-L-METHIONINE SYNTHASE"/>
    <property type="match status" value="1"/>
</dbReference>
<dbReference type="PANTHER" id="PTHR43861">
    <property type="entry name" value="TRANS-ACONITATE 2-METHYLTRANSFERASE-RELATED"/>
    <property type="match status" value="1"/>
</dbReference>
<dbReference type="Pfam" id="PF13649">
    <property type="entry name" value="Methyltransf_25"/>
    <property type="match status" value="1"/>
</dbReference>
<dbReference type="PIRSF" id="PIRSF006325">
    <property type="entry name" value="MeTrfase_bac"/>
    <property type="match status" value="1"/>
</dbReference>
<dbReference type="SUPFAM" id="SSF53335">
    <property type="entry name" value="S-adenosyl-L-methionine-dependent methyltransferases"/>
    <property type="match status" value="1"/>
</dbReference>